<dbReference type="EMBL" id="AF080560">
    <property type="protein sequence ID" value="AAC69866.1"/>
    <property type="molecule type" value="Genomic_DNA"/>
</dbReference>
<dbReference type="Proteomes" id="UP000007454">
    <property type="component" value="Genome"/>
</dbReference>
<reference key="1">
    <citation type="journal article" date="1998" name="Virology">
        <title>Psittacine beak and feather disease virus nucleotide sequence analysis and its relationship to porcine circovirus, plant circoviruses, and chicken anaemia virus.</title>
        <authorList>
            <person name="Bassami M.R."/>
            <person name="Berryman D."/>
            <person name="Wilcox G.E."/>
            <person name="Raidal S.R."/>
        </authorList>
    </citation>
    <scope>NUCLEOTIDE SEQUENCE [GENOMIC DNA]</scope>
</reference>
<protein>
    <recommendedName>
        <fullName>Uncharacterized protein ORF6</fullName>
    </recommendedName>
</protein>
<organismHost>
    <name type="scientific">Gracula</name>
    <dbReference type="NCBI Taxonomy" id="116991"/>
</organismHost>
<organismHost>
    <name type="scientific">Psittaciformes</name>
    <dbReference type="NCBI Taxonomy" id="9223"/>
</organismHost>
<gene>
    <name type="ORF">ORF6</name>
</gene>
<sequence length="88" mass="9846">MKTSPRLSVIDGVGEEVRPDLFQLVHVVPPNTCEPPEQWLRVTVLLVPGLGGLIARDNYPLAGKLHKSALDWHFMWITVAEAEHLAIR</sequence>
<accession>Q9YUD1</accession>
<name>ORF6_BFDV</name>
<proteinExistence type="predicted"/>
<feature type="chain" id="PRO_0000319855" description="Uncharacterized protein ORF6">
    <location>
        <begin position="1"/>
        <end position="88"/>
    </location>
</feature>
<keyword id="KW-1185">Reference proteome</keyword>
<organism>
    <name type="scientific">Beak and feather disease virus</name>
    <name type="common">BFDV</name>
    <dbReference type="NCBI Taxonomy" id="77856"/>
    <lineage>
        <taxon>Viruses</taxon>
        <taxon>Monodnaviria</taxon>
        <taxon>Shotokuvirae</taxon>
        <taxon>Cressdnaviricota</taxon>
        <taxon>Arfiviricetes</taxon>
        <taxon>Cirlivirales</taxon>
        <taxon>Circoviridae</taxon>
        <taxon>Circovirus</taxon>
        <taxon>Circovirus parrot</taxon>
    </lineage>
</organism>